<keyword id="KW-1003">Cell membrane</keyword>
<keyword id="KW-0472">Membrane</keyword>
<keyword id="KW-1185">Reference proteome</keyword>
<keyword id="KW-0812">Transmembrane</keyword>
<keyword id="KW-1133">Transmembrane helix</keyword>
<sequence length="519" mass="55499">MLSVLSINYRYYLMELIDFSSSVWSIVPALLAIILAIATRRVLVSLSAGIIIGSLMLSDWQIGSAFNYLVKNVVSLVYADGEINSNMNIVLFLLLLGVLTALLTVSGSNRAFAEWAQSRIKGRRGAKLLAASLVFVTFIDDYFHSLAVGAIARPVTDRFKVSRAKLAYILDSTAAPMCVMMPVSSWGAYIITLIGGLLATYSITEYTPIGAFVAMSSMNFYAIFSIIMVFFVAYFSFDIASMVRHEKLALKNTEDQLEEETGTKGQVRNLILPILVLIIATVSMMIYTGAEALAADGKVFSVLGTFENTVVGTSLVVGGFCSIIISTLLIILDRQVSVPEYVRSWIVGIKSMSGAIAILFFAWTINKIVGDMQTGKYLSSLVSGNIPMQFLPVILFVLGAAMAFSTGTSWGTFGIMLPIAAAMAANAAPELLLPCLSAVMAGAVCGDHCSPVSDTTILSSTGAKCNHIDHVTTQLPYAATVATATSIGYIVVGFTYSGLAGFAATAVSLIVIIFAVKKR</sequence>
<reference key="1">
    <citation type="journal article" date="1995" name="Science">
        <title>Whole-genome random sequencing and assembly of Haemophilus influenzae Rd.</title>
        <authorList>
            <person name="Fleischmann R.D."/>
            <person name="Adams M.D."/>
            <person name="White O."/>
            <person name="Clayton R.A."/>
            <person name="Kirkness E.F."/>
            <person name="Kerlavage A.R."/>
            <person name="Bult C.J."/>
            <person name="Tomb J.-F."/>
            <person name="Dougherty B.A."/>
            <person name="Merrick J.M."/>
            <person name="McKenney K."/>
            <person name="Sutton G.G."/>
            <person name="FitzHugh W."/>
            <person name="Fields C.A."/>
            <person name="Gocayne J.D."/>
            <person name="Scott J.D."/>
            <person name="Shirley R."/>
            <person name="Liu L.-I."/>
            <person name="Glodek A."/>
            <person name="Kelley J.M."/>
            <person name="Weidman J.F."/>
            <person name="Phillips C.A."/>
            <person name="Spriggs T."/>
            <person name="Hedblom E."/>
            <person name="Cotton M.D."/>
            <person name="Utterback T.R."/>
            <person name="Hanna M.C."/>
            <person name="Nguyen D.T."/>
            <person name="Saudek D.M."/>
            <person name="Brandon R.C."/>
            <person name="Fine L.D."/>
            <person name="Fritchman J.L."/>
            <person name="Fuhrmann J.L."/>
            <person name="Geoghagen N.S.M."/>
            <person name="Gnehm C.L."/>
            <person name="McDonald L.A."/>
            <person name="Small K.V."/>
            <person name="Fraser C.M."/>
            <person name="Smith H.O."/>
            <person name="Venter J.C."/>
        </authorList>
    </citation>
    <scope>NUCLEOTIDE SEQUENCE [LARGE SCALE GENOMIC DNA]</scope>
    <source>
        <strain>ATCC 51907 / DSM 11121 / KW20 / Rd</strain>
    </source>
</reference>
<organism>
    <name type="scientific">Haemophilus influenzae (strain ATCC 51907 / DSM 11121 / KW20 / Rd)</name>
    <dbReference type="NCBI Taxonomy" id="71421"/>
    <lineage>
        <taxon>Bacteria</taxon>
        <taxon>Pseudomonadati</taxon>
        <taxon>Pseudomonadota</taxon>
        <taxon>Gammaproteobacteria</taxon>
        <taxon>Pasteurellales</taxon>
        <taxon>Pasteurellaceae</taxon>
        <taxon>Haemophilus</taxon>
    </lineage>
</organism>
<name>Y1586_HAEIN</name>
<dbReference type="EMBL" id="L42023">
    <property type="protein sequence ID" value="AAC23234.1"/>
    <property type="molecule type" value="Genomic_DNA"/>
</dbReference>
<dbReference type="PIR" id="C64037">
    <property type="entry name" value="C64037"/>
</dbReference>
<dbReference type="RefSeq" id="NP_439731.1">
    <property type="nucleotide sequence ID" value="NC_000907.1"/>
</dbReference>
<dbReference type="STRING" id="71421.HI_1586"/>
<dbReference type="EnsemblBacteria" id="AAC23234">
    <property type="protein sequence ID" value="AAC23234"/>
    <property type="gene ID" value="HI_1586"/>
</dbReference>
<dbReference type="KEGG" id="hin:HI_1586"/>
<dbReference type="PATRIC" id="fig|71421.8.peg.1660"/>
<dbReference type="eggNOG" id="COG1757">
    <property type="taxonomic scope" value="Bacteria"/>
</dbReference>
<dbReference type="HOGENOM" id="CLU_018751_1_0_6"/>
<dbReference type="OrthoDB" id="9762978at2"/>
<dbReference type="PhylomeDB" id="P44263"/>
<dbReference type="BioCyc" id="HINF71421:G1GJ1-1602-MONOMER"/>
<dbReference type="Proteomes" id="UP000000579">
    <property type="component" value="Chromosome"/>
</dbReference>
<dbReference type="GO" id="GO:0005886">
    <property type="term" value="C:plasma membrane"/>
    <property type="evidence" value="ECO:0007669"/>
    <property type="project" value="UniProtKB-SubCell"/>
</dbReference>
<dbReference type="InterPro" id="IPR018461">
    <property type="entry name" value="Na/H_Antiport_NhaC-like_C"/>
</dbReference>
<dbReference type="PANTHER" id="PTHR43478">
    <property type="entry name" value="NA+/H+ ANTIPORTER-RELATED"/>
    <property type="match status" value="1"/>
</dbReference>
<dbReference type="PANTHER" id="PTHR43478:SF1">
    <property type="entry name" value="NA+_H+ ANTIPORTER NHAC-LIKE C-TERMINAL DOMAIN-CONTAINING PROTEIN"/>
    <property type="match status" value="1"/>
</dbReference>
<dbReference type="Pfam" id="PF03553">
    <property type="entry name" value="Na_H_antiporter"/>
    <property type="match status" value="1"/>
</dbReference>
<gene>
    <name type="ordered locus">HI_1586</name>
</gene>
<accession>P44263</accession>
<feature type="chain" id="PRO_0000078093" description="Uncharacterized protein HI_1586">
    <location>
        <begin position="1"/>
        <end position="519"/>
    </location>
</feature>
<feature type="transmembrane region" description="Helical" evidence="1">
    <location>
        <begin position="19"/>
        <end position="39"/>
    </location>
</feature>
<feature type="transmembrane region" description="Helical" evidence="1">
    <location>
        <begin position="42"/>
        <end position="62"/>
    </location>
</feature>
<feature type="transmembrane region" description="Helical" evidence="1">
    <location>
        <begin position="87"/>
        <end position="107"/>
    </location>
</feature>
<feature type="transmembrane region" description="Helical" evidence="1">
    <location>
        <begin position="128"/>
        <end position="148"/>
    </location>
</feature>
<feature type="transmembrane region" description="Helical" evidence="1">
    <location>
        <begin position="179"/>
        <end position="199"/>
    </location>
</feature>
<feature type="transmembrane region" description="Helical" evidence="1">
    <location>
        <begin position="220"/>
        <end position="240"/>
    </location>
</feature>
<feature type="transmembrane region" description="Helical" evidence="1">
    <location>
        <begin position="270"/>
        <end position="290"/>
    </location>
</feature>
<feature type="transmembrane region" description="Helical" evidence="1">
    <location>
        <begin position="311"/>
        <end position="331"/>
    </location>
</feature>
<feature type="transmembrane region" description="Helical" evidence="1">
    <location>
        <begin position="345"/>
        <end position="365"/>
    </location>
</feature>
<feature type="transmembrane region" description="Helical" evidence="1">
    <location>
        <begin position="386"/>
        <end position="406"/>
    </location>
</feature>
<feature type="transmembrane region" description="Helical" evidence="1">
    <location>
        <begin position="413"/>
        <end position="433"/>
    </location>
</feature>
<feature type="transmembrane region" description="Helical" evidence="1">
    <location>
        <begin position="475"/>
        <end position="495"/>
    </location>
</feature>
<feature type="transmembrane region" description="Helical" evidence="1">
    <location>
        <begin position="496"/>
        <end position="516"/>
    </location>
</feature>
<comment type="subcellular location">
    <subcellularLocation>
        <location evidence="2">Cell membrane</location>
        <topology evidence="2">Multi-pass membrane protein</topology>
    </subcellularLocation>
</comment>
<evidence type="ECO:0000255" key="1"/>
<evidence type="ECO:0000305" key="2"/>
<proteinExistence type="predicted"/>
<protein>
    <recommendedName>
        <fullName>Uncharacterized protein HI_1586</fullName>
    </recommendedName>
</protein>